<evidence type="ECO:0000255" key="1">
    <source>
        <dbReference type="HAMAP-Rule" id="MF_01018"/>
    </source>
</evidence>
<accession>A6VBC2</accession>
<dbReference type="EC" id="2.4.2.17" evidence="1"/>
<dbReference type="EMBL" id="CP000744">
    <property type="protein sequence ID" value="ABR80935.1"/>
    <property type="molecule type" value="Genomic_DNA"/>
</dbReference>
<dbReference type="RefSeq" id="WP_012077209.1">
    <property type="nucleotide sequence ID" value="NC_009656.1"/>
</dbReference>
<dbReference type="SMR" id="A6VBC2"/>
<dbReference type="GeneID" id="77222950"/>
<dbReference type="KEGG" id="pap:PSPA7_5021"/>
<dbReference type="HOGENOM" id="CLU_038115_2_0_6"/>
<dbReference type="UniPathway" id="UPA00031">
    <property type="reaction ID" value="UER00006"/>
</dbReference>
<dbReference type="Proteomes" id="UP000001582">
    <property type="component" value="Chromosome"/>
</dbReference>
<dbReference type="GO" id="GO:0005737">
    <property type="term" value="C:cytoplasm"/>
    <property type="evidence" value="ECO:0007669"/>
    <property type="project" value="UniProtKB-SubCell"/>
</dbReference>
<dbReference type="GO" id="GO:0005524">
    <property type="term" value="F:ATP binding"/>
    <property type="evidence" value="ECO:0007669"/>
    <property type="project" value="UniProtKB-KW"/>
</dbReference>
<dbReference type="GO" id="GO:0003879">
    <property type="term" value="F:ATP phosphoribosyltransferase activity"/>
    <property type="evidence" value="ECO:0007669"/>
    <property type="project" value="UniProtKB-UniRule"/>
</dbReference>
<dbReference type="GO" id="GO:0000105">
    <property type="term" value="P:L-histidine biosynthetic process"/>
    <property type="evidence" value="ECO:0007669"/>
    <property type="project" value="UniProtKB-UniRule"/>
</dbReference>
<dbReference type="CDD" id="cd13595">
    <property type="entry name" value="PBP2_HisGs"/>
    <property type="match status" value="1"/>
</dbReference>
<dbReference type="FunFam" id="3.40.190.10:FF:000011">
    <property type="entry name" value="ATP phosphoribosyltransferase"/>
    <property type="match status" value="1"/>
</dbReference>
<dbReference type="FunFam" id="3.40.190.10:FF:000022">
    <property type="entry name" value="ATP phosphoribosyltransferase"/>
    <property type="match status" value="1"/>
</dbReference>
<dbReference type="Gene3D" id="3.40.190.10">
    <property type="entry name" value="Periplasmic binding protein-like II"/>
    <property type="match status" value="2"/>
</dbReference>
<dbReference type="HAMAP" id="MF_01018">
    <property type="entry name" value="HisG_Short"/>
    <property type="match status" value="1"/>
</dbReference>
<dbReference type="InterPro" id="IPR013820">
    <property type="entry name" value="ATP_PRibTrfase_cat"/>
</dbReference>
<dbReference type="InterPro" id="IPR018198">
    <property type="entry name" value="ATP_PRibTrfase_CS"/>
</dbReference>
<dbReference type="InterPro" id="IPR001348">
    <property type="entry name" value="ATP_PRibTrfase_HisG"/>
</dbReference>
<dbReference type="InterPro" id="IPR024893">
    <property type="entry name" value="ATP_PRibTrfase_HisG_short"/>
</dbReference>
<dbReference type="NCBIfam" id="TIGR00070">
    <property type="entry name" value="hisG"/>
    <property type="match status" value="1"/>
</dbReference>
<dbReference type="PANTHER" id="PTHR21403:SF8">
    <property type="entry name" value="ATP PHOSPHORIBOSYLTRANSFERASE"/>
    <property type="match status" value="1"/>
</dbReference>
<dbReference type="PANTHER" id="PTHR21403">
    <property type="entry name" value="ATP PHOSPHORIBOSYLTRANSFERASE ATP-PRTASE"/>
    <property type="match status" value="1"/>
</dbReference>
<dbReference type="Pfam" id="PF01634">
    <property type="entry name" value="HisG"/>
    <property type="match status" value="1"/>
</dbReference>
<dbReference type="SUPFAM" id="SSF53850">
    <property type="entry name" value="Periplasmic binding protein-like II"/>
    <property type="match status" value="1"/>
</dbReference>
<dbReference type="PROSITE" id="PS01316">
    <property type="entry name" value="ATP_P_PHORIBOSYLTR"/>
    <property type="match status" value="1"/>
</dbReference>
<sequence length="211" mass="22827">MLTIALSKGRILDDTLPLLAAAGIVPSENPDKSRKLIIPTSLPDVRLLIVRATDVPTYVEHGAADLGVAGKDVLMEYGGQGLYEPLDLRIANCKLMTAGAIGAAEPKGRLRVATKFVNVAKRYYAEQGRQVDVIKLYGSMELAPLVGLADKIIDVVDTGNTLRANGLEPQELIATISSRLVVNKASMKMQHARIQALIDTLRDAVEARHRH</sequence>
<comment type="function">
    <text evidence="1">Catalyzes the condensation of ATP and 5-phosphoribose 1-diphosphate to form N'-(5'-phosphoribosyl)-ATP (PR-ATP). Has a crucial role in the pathway because the rate of histidine biosynthesis seems to be controlled primarily by regulation of HisG enzymatic activity.</text>
</comment>
<comment type="catalytic activity">
    <reaction evidence="1">
        <text>1-(5-phospho-beta-D-ribosyl)-ATP + diphosphate = 5-phospho-alpha-D-ribose 1-diphosphate + ATP</text>
        <dbReference type="Rhea" id="RHEA:18473"/>
        <dbReference type="ChEBI" id="CHEBI:30616"/>
        <dbReference type="ChEBI" id="CHEBI:33019"/>
        <dbReference type="ChEBI" id="CHEBI:58017"/>
        <dbReference type="ChEBI" id="CHEBI:73183"/>
        <dbReference type="EC" id="2.4.2.17"/>
    </reaction>
</comment>
<comment type="pathway">
    <text evidence="1">Amino-acid biosynthesis; L-histidine biosynthesis; L-histidine from 5-phospho-alpha-D-ribose 1-diphosphate: step 1/9.</text>
</comment>
<comment type="subunit">
    <text evidence="1">Heteromultimer composed of HisG and HisZ subunits.</text>
</comment>
<comment type="subcellular location">
    <subcellularLocation>
        <location evidence="1">Cytoplasm</location>
    </subcellularLocation>
</comment>
<comment type="domain">
    <text>Lacks the C-terminal regulatory region which is replaced by HisZ.</text>
</comment>
<comment type="similarity">
    <text evidence="1">Belongs to the ATP phosphoribosyltransferase family. Short subfamily.</text>
</comment>
<reference key="1">
    <citation type="submission" date="2007-06" db="EMBL/GenBank/DDBJ databases">
        <authorList>
            <person name="Dodson R.J."/>
            <person name="Harkins D."/>
            <person name="Paulsen I.T."/>
        </authorList>
    </citation>
    <scope>NUCLEOTIDE SEQUENCE [LARGE SCALE GENOMIC DNA]</scope>
    <source>
        <strain>DSM 24068 / PA7</strain>
    </source>
</reference>
<gene>
    <name evidence="1" type="primary">hisG</name>
    <name type="ordered locus">PSPA7_5021</name>
</gene>
<organism>
    <name type="scientific">Pseudomonas paraeruginosa (strain DSM 24068 / PA7)</name>
    <name type="common">Pseudomonas aeruginosa (strain PA7)</name>
    <dbReference type="NCBI Taxonomy" id="381754"/>
    <lineage>
        <taxon>Bacteria</taxon>
        <taxon>Pseudomonadati</taxon>
        <taxon>Pseudomonadota</taxon>
        <taxon>Gammaproteobacteria</taxon>
        <taxon>Pseudomonadales</taxon>
        <taxon>Pseudomonadaceae</taxon>
        <taxon>Pseudomonas</taxon>
        <taxon>Pseudomonas paraeruginosa</taxon>
    </lineage>
</organism>
<keyword id="KW-0028">Amino-acid biosynthesis</keyword>
<keyword id="KW-0067">ATP-binding</keyword>
<keyword id="KW-0963">Cytoplasm</keyword>
<keyword id="KW-0328">Glycosyltransferase</keyword>
<keyword id="KW-0368">Histidine biosynthesis</keyword>
<keyword id="KW-0547">Nucleotide-binding</keyword>
<keyword id="KW-0808">Transferase</keyword>
<name>HIS1_PSEP7</name>
<feature type="chain" id="PRO_1000063297" description="ATP phosphoribosyltransferase">
    <location>
        <begin position="1"/>
        <end position="211"/>
    </location>
</feature>
<protein>
    <recommendedName>
        <fullName evidence="1">ATP phosphoribosyltransferase</fullName>
        <shortName evidence="1">ATP-PRT</shortName>
        <shortName evidence="1">ATP-PRTase</shortName>
        <ecNumber evidence="1">2.4.2.17</ecNumber>
    </recommendedName>
</protein>
<proteinExistence type="inferred from homology"/>